<reference key="1">
    <citation type="journal article" date="2000" name="Nucleic Acids Res.">
        <title>Complete genome sequence of the alkaliphilic bacterium Bacillus halodurans and genomic sequence comparison with Bacillus subtilis.</title>
        <authorList>
            <person name="Takami H."/>
            <person name="Nakasone K."/>
            <person name="Takaki Y."/>
            <person name="Maeno G."/>
            <person name="Sasaki R."/>
            <person name="Masui N."/>
            <person name="Fuji F."/>
            <person name="Hirama C."/>
            <person name="Nakamura Y."/>
            <person name="Ogasawara N."/>
            <person name="Kuhara S."/>
            <person name="Horikoshi K."/>
        </authorList>
    </citation>
    <scope>NUCLEOTIDE SEQUENCE [LARGE SCALE GENOMIC DNA]</scope>
    <source>
        <strain>ATCC BAA-125 / DSM 18197 / FERM 7344 / JCM 9153 / C-125</strain>
    </source>
</reference>
<comment type="function">
    <text evidence="1">Catalyzes the reductive methylation of 2'-deoxyuridine-5'-monophosphate (dUMP) to 2'-deoxythymidine-5'-monophosphate (dTMP) while utilizing 5,10-methylenetetrahydrofolate (mTHF) as the methyl donor and reductant in the reaction, yielding dihydrofolate (DHF) as a by-product. This enzymatic reaction provides an intracellular de novo source of dTMP, an essential precursor for DNA biosynthesis.</text>
</comment>
<comment type="catalytic activity">
    <reaction evidence="1">
        <text>dUMP + (6R)-5,10-methylene-5,6,7,8-tetrahydrofolate = 7,8-dihydrofolate + dTMP</text>
        <dbReference type="Rhea" id="RHEA:12104"/>
        <dbReference type="ChEBI" id="CHEBI:15636"/>
        <dbReference type="ChEBI" id="CHEBI:57451"/>
        <dbReference type="ChEBI" id="CHEBI:63528"/>
        <dbReference type="ChEBI" id="CHEBI:246422"/>
        <dbReference type="EC" id="2.1.1.45"/>
    </reaction>
</comment>
<comment type="pathway">
    <text evidence="1">Pyrimidine metabolism; dTTP biosynthesis.</text>
</comment>
<comment type="subunit">
    <text evidence="1">Homodimer.</text>
</comment>
<comment type="subcellular location">
    <subcellularLocation>
        <location evidence="1">Cytoplasm</location>
    </subcellularLocation>
</comment>
<comment type="similarity">
    <text evidence="1">Belongs to the thymidylate synthase family. Bacterial-type ThyA subfamily.</text>
</comment>
<proteinExistence type="inferred from homology"/>
<name>TYSY_HALH5</name>
<protein>
    <recommendedName>
        <fullName evidence="1">Thymidylate synthase</fullName>
        <shortName evidence="1">TS</shortName>
        <shortName evidence="1">TSase</shortName>
        <ecNumber evidence="1">2.1.1.45</ecNumber>
    </recommendedName>
</protein>
<dbReference type="EC" id="2.1.1.45" evidence="1"/>
<dbReference type="EMBL" id="BA000004">
    <property type="protein sequence ID" value="BAB07170.1"/>
    <property type="molecule type" value="Genomic_DNA"/>
</dbReference>
<dbReference type="PIR" id="C84081">
    <property type="entry name" value="C84081"/>
</dbReference>
<dbReference type="RefSeq" id="WP_010899587.1">
    <property type="nucleotide sequence ID" value="NC_002570.2"/>
</dbReference>
<dbReference type="SMR" id="Q9K7B5"/>
<dbReference type="STRING" id="272558.gene:10729364"/>
<dbReference type="KEGG" id="bha:BH3451"/>
<dbReference type="eggNOG" id="COG0207">
    <property type="taxonomic scope" value="Bacteria"/>
</dbReference>
<dbReference type="HOGENOM" id="CLU_021669_0_0_9"/>
<dbReference type="OrthoDB" id="9774633at2"/>
<dbReference type="UniPathway" id="UPA00575"/>
<dbReference type="Proteomes" id="UP000001258">
    <property type="component" value="Chromosome"/>
</dbReference>
<dbReference type="GO" id="GO:0005829">
    <property type="term" value="C:cytosol"/>
    <property type="evidence" value="ECO:0007669"/>
    <property type="project" value="TreeGrafter"/>
</dbReference>
<dbReference type="GO" id="GO:0004799">
    <property type="term" value="F:thymidylate synthase activity"/>
    <property type="evidence" value="ECO:0007669"/>
    <property type="project" value="UniProtKB-UniRule"/>
</dbReference>
<dbReference type="GO" id="GO:0006231">
    <property type="term" value="P:dTMP biosynthetic process"/>
    <property type="evidence" value="ECO:0007669"/>
    <property type="project" value="UniProtKB-UniRule"/>
</dbReference>
<dbReference type="GO" id="GO:0006235">
    <property type="term" value="P:dTTP biosynthetic process"/>
    <property type="evidence" value="ECO:0007669"/>
    <property type="project" value="UniProtKB-UniRule"/>
</dbReference>
<dbReference type="GO" id="GO:0032259">
    <property type="term" value="P:methylation"/>
    <property type="evidence" value="ECO:0007669"/>
    <property type="project" value="UniProtKB-KW"/>
</dbReference>
<dbReference type="CDD" id="cd00351">
    <property type="entry name" value="TS_Pyrimidine_HMase"/>
    <property type="match status" value="1"/>
</dbReference>
<dbReference type="FunFam" id="3.30.572.10:FF:000001">
    <property type="entry name" value="Thymidylate synthase"/>
    <property type="match status" value="1"/>
</dbReference>
<dbReference type="Gene3D" id="3.30.572.10">
    <property type="entry name" value="Thymidylate synthase/dCMP hydroxymethylase domain"/>
    <property type="match status" value="1"/>
</dbReference>
<dbReference type="HAMAP" id="MF_00008">
    <property type="entry name" value="Thymidy_synth_bact"/>
    <property type="match status" value="1"/>
</dbReference>
<dbReference type="InterPro" id="IPR045097">
    <property type="entry name" value="Thymidate_synth/dCMP_Mease"/>
</dbReference>
<dbReference type="InterPro" id="IPR023451">
    <property type="entry name" value="Thymidate_synth/dCMP_Mease_dom"/>
</dbReference>
<dbReference type="InterPro" id="IPR036926">
    <property type="entry name" value="Thymidate_synth/dCMP_Mease_sf"/>
</dbReference>
<dbReference type="InterPro" id="IPR000398">
    <property type="entry name" value="Thymidylate_synthase"/>
</dbReference>
<dbReference type="InterPro" id="IPR020940">
    <property type="entry name" value="Thymidylate_synthase_AS"/>
</dbReference>
<dbReference type="NCBIfam" id="NF002497">
    <property type="entry name" value="PRK01827.1-3"/>
    <property type="match status" value="1"/>
</dbReference>
<dbReference type="NCBIfam" id="NF002499">
    <property type="entry name" value="PRK01827.1-5"/>
    <property type="match status" value="1"/>
</dbReference>
<dbReference type="NCBIfam" id="TIGR03284">
    <property type="entry name" value="thym_sym"/>
    <property type="match status" value="2"/>
</dbReference>
<dbReference type="PANTHER" id="PTHR11548:SF9">
    <property type="entry name" value="THYMIDYLATE SYNTHASE"/>
    <property type="match status" value="1"/>
</dbReference>
<dbReference type="PANTHER" id="PTHR11548">
    <property type="entry name" value="THYMIDYLATE SYNTHASE 1"/>
    <property type="match status" value="1"/>
</dbReference>
<dbReference type="Pfam" id="PF00303">
    <property type="entry name" value="Thymidylat_synt"/>
    <property type="match status" value="1"/>
</dbReference>
<dbReference type="PRINTS" id="PR00108">
    <property type="entry name" value="THYMDSNTHASE"/>
</dbReference>
<dbReference type="SUPFAM" id="SSF55831">
    <property type="entry name" value="Thymidylate synthase/dCMP hydroxymethylase"/>
    <property type="match status" value="1"/>
</dbReference>
<dbReference type="PROSITE" id="PS00091">
    <property type="entry name" value="THYMIDYLATE_SYNTHASE"/>
    <property type="match status" value="1"/>
</dbReference>
<accession>Q9K7B5</accession>
<evidence type="ECO:0000255" key="1">
    <source>
        <dbReference type="HAMAP-Rule" id="MF_00008"/>
    </source>
</evidence>
<keyword id="KW-0963">Cytoplasm</keyword>
<keyword id="KW-0489">Methyltransferase</keyword>
<keyword id="KW-0545">Nucleotide biosynthesis</keyword>
<keyword id="KW-1185">Reference proteome</keyword>
<keyword id="KW-0808">Transferase</keyword>
<sequence length="264" mass="30457">MEQYLELCRHVLEHGTERSDRTGTGTISVFGYQMRFDLQEGFPVVTTKKLHLRSIIHELLWFLKGETNIAYLQENGVRIWNEWADENGELGPVYGKQWRSWEGANGKTVDQISQVVEAIKHQPDSRRLIVSAWNAAEIEDMALAPCHCLFQFYVQDGKLSCQLYQRSADIFLGVPFNIASYALLTKMIAQVCDLEEGEFVHTFGDAHIYLNHIEQVKLQLTREPRPLPEMRLNPEVRSLFDFTFDDFELVGYDPHPHIKGEVSV</sequence>
<organism>
    <name type="scientific">Halalkalibacterium halodurans (strain ATCC BAA-125 / DSM 18197 / FERM 7344 / JCM 9153 / C-125)</name>
    <name type="common">Bacillus halodurans</name>
    <dbReference type="NCBI Taxonomy" id="272558"/>
    <lineage>
        <taxon>Bacteria</taxon>
        <taxon>Bacillati</taxon>
        <taxon>Bacillota</taxon>
        <taxon>Bacilli</taxon>
        <taxon>Bacillales</taxon>
        <taxon>Bacillaceae</taxon>
        <taxon>Halalkalibacterium (ex Joshi et al. 2022)</taxon>
    </lineage>
</organism>
<gene>
    <name evidence="1" type="primary">thyA</name>
    <name type="synonym">thyB</name>
    <name type="ordered locus">BH3451</name>
</gene>
<feature type="chain" id="PRO_0000140924" description="Thymidylate synthase">
    <location>
        <begin position="1"/>
        <end position="264"/>
    </location>
</feature>
<feature type="active site" description="Nucleophile" evidence="1">
    <location>
        <position position="146"/>
    </location>
</feature>
<feature type="binding site" description="in other chain" evidence="1">
    <location>
        <position position="21"/>
    </location>
    <ligand>
        <name>dUMP</name>
        <dbReference type="ChEBI" id="CHEBI:246422"/>
        <note>ligand shared between dimeric partners</note>
    </ligand>
</feature>
<feature type="binding site" evidence="1">
    <location>
        <position position="51"/>
    </location>
    <ligand>
        <name>(6R)-5,10-methylene-5,6,7,8-tetrahydrofolate</name>
        <dbReference type="ChEBI" id="CHEBI:15636"/>
    </ligand>
</feature>
<feature type="binding site" evidence="1">
    <location>
        <begin position="126"/>
        <end position="127"/>
    </location>
    <ligand>
        <name>dUMP</name>
        <dbReference type="ChEBI" id="CHEBI:246422"/>
        <note>ligand shared between dimeric partners</note>
    </ligand>
</feature>
<feature type="binding site" description="in other chain" evidence="1">
    <location>
        <begin position="166"/>
        <end position="169"/>
    </location>
    <ligand>
        <name>dUMP</name>
        <dbReference type="ChEBI" id="CHEBI:246422"/>
        <note>ligand shared between dimeric partners</note>
    </ligand>
</feature>
<feature type="binding site" evidence="1">
    <location>
        <position position="169"/>
    </location>
    <ligand>
        <name>(6R)-5,10-methylene-5,6,7,8-tetrahydrofolate</name>
        <dbReference type="ChEBI" id="CHEBI:15636"/>
    </ligand>
</feature>
<feature type="binding site" description="in other chain" evidence="1">
    <location>
        <position position="177"/>
    </location>
    <ligand>
        <name>dUMP</name>
        <dbReference type="ChEBI" id="CHEBI:246422"/>
        <note>ligand shared between dimeric partners</note>
    </ligand>
</feature>
<feature type="binding site" description="in other chain" evidence="1">
    <location>
        <begin position="207"/>
        <end position="209"/>
    </location>
    <ligand>
        <name>dUMP</name>
        <dbReference type="ChEBI" id="CHEBI:246422"/>
        <note>ligand shared between dimeric partners</note>
    </ligand>
</feature>
<feature type="binding site" evidence="1">
    <location>
        <position position="263"/>
    </location>
    <ligand>
        <name>(6R)-5,10-methylene-5,6,7,8-tetrahydrofolate</name>
        <dbReference type="ChEBI" id="CHEBI:15636"/>
    </ligand>
</feature>